<accession>Q31ED4</accession>
<dbReference type="EC" id="2.7.2.8" evidence="1"/>
<dbReference type="EMBL" id="CP000109">
    <property type="protein sequence ID" value="ABB42489.1"/>
    <property type="status" value="ALT_INIT"/>
    <property type="molecule type" value="Genomic_DNA"/>
</dbReference>
<dbReference type="SMR" id="Q31ED4"/>
<dbReference type="STRING" id="317025.Tcr_1899"/>
<dbReference type="KEGG" id="tcx:Tcr_1899"/>
<dbReference type="eggNOG" id="COG0548">
    <property type="taxonomic scope" value="Bacteria"/>
</dbReference>
<dbReference type="HOGENOM" id="CLU_053680_0_0_6"/>
<dbReference type="UniPathway" id="UPA00068">
    <property type="reaction ID" value="UER00107"/>
</dbReference>
<dbReference type="GO" id="GO:0005737">
    <property type="term" value="C:cytoplasm"/>
    <property type="evidence" value="ECO:0007669"/>
    <property type="project" value="UniProtKB-SubCell"/>
</dbReference>
<dbReference type="GO" id="GO:0003991">
    <property type="term" value="F:acetylglutamate kinase activity"/>
    <property type="evidence" value="ECO:0007669"/>
    <property type="project" value="UniProtKB-UniRule"/>
</dbReference>
<dbReference type="GO" id="GO:0005524">
    <property type="term" value="F:ATP binding"/>
    <property type="evidence" value="ECO:0007669"/>
    <property type="project" value="UniProtKB-UniRule"/>
</dbReference>
<dbReference type="GO" id="GO:0042450">
    <property type="term" value="P:arginine biosynthetic process via ornithine"/>
    <property type="evidence" value="ECO:0007669"/>
    <property type="project" value="UniProtKB-UniRule"/>
</dbReference>
<dbReference type="GO" id="GO:0006526">
    <property type="term" value="P:L-arginine biosynthetic process"/>
    <property type="evidence" value="ECO:0007669"/>
    <property type="project" value="UniProtKB-UniPathway"/>
</dbReference>
<dbReference type="CDD" id="cd04250">
    <property type="entry name" value="AAK_NAGK-C"/>
    <property type="match status" value="1"/>
</dbReference>
<dbReference type="FunFam" id="3.40.1160.10:FF:000004">
    <property type="entry name" value="Acetylglutamate kinase"/>
    <property type="match status" value="1"/>
</dbReference>
<dbReference type="Gene3D" id="3.40.1160.10">
    <property type="entry name" value="Acetylglutamate kinase-like"/>
    <property type="match status" value="1"/>
</dbReference>
<dbReference type="HAMAP" id="MF_00082">
    <property type="entry name" value="ArgB"/>
    <property type="match status" value="1"/>
</dbReference>
<dbReference type="InterPro" id="IPR036393">
    <property type="entry name" value="AceGlu_kinase-like_sf"/>
</dbReference>
<dbReference type="InterPro" id="IPR004662">
    <property type="entry name" value="AcgluKinase_fam"/>
</dbReference>
<dbReference type="InterPro" id="IPR037528">
    <property type="entry name" value="ArgB"/>
</dbReference>
<dbReference type="InterPro" id="IPR001048">
    <property type="entry name" value="Asp/Glu/Uridylate_kinase"/>
</dbReference>
<dbReference type="InterPro" id="IPR001057">
    <property type="entry name" value="Glu/AcGlu_kinase"/>
</dbReference>
<dbReference type="InterPro" id="IPR041727">
    <property type="entry name" value="NAGK-C"/>
</dbReference>
<dbReference type="NCBIfam" id="TIGR00761">
    <property type="entry name" value="argB"/>
    <property type="match status" value="1"/>
</dbReference>
<dbReference type="PANTHER" id="PTHR23342">
    <property type="entry name" value="N-ACETYLGLUTAMATE SYNTHASE"/>
    <property type="match status" value="1"/>
</dbReference>
<dbReference type="PANTHER" id="PTHR23342:SF0">
    <property type="entry name" value="N-ACETYLGLUTAMATE SYNTHASE, MITOCHONDRIAL"/>
    <property type="match status" value="1"/>
</dbReference>
<dbReference type="Pfam" id="PF00696">
    <property type="entry name" value="AA_kinase"/>
    <property type="match status" value="1"/>
</dbReference>
<dbReference type="PIRSF" id="PIRSF000728">
    <property type="entry name" value="NAGK"/>
    <property type="match status" value="1"/>
</dbReference>
<dbReference type="PRINTS" id="PR00474">
    <property type="entry name" value="GLU5KINASE"/>
</dbReference>
<dbReference type="SUPFAM" id="SSF53633">
    <property type="entry name" value="Carbamate kinase-like"/>
    <property type="match status" value="1"/>
</dbReference>
<proteinExistence type="inferred from homology"/>
<reference key="1">
    <citation type="journal article" date="2006" name="PLoS Biol.">
        <title>The genome of deep-sea vent chemolithoautotroph Thiomicrospira crunogena XCL-2.</title>
        <authorList>
            <person name="Scott K.M."/>
            <person name="Sievert S.M."/>
            <person name="Abril F.N."/>
            <person name="Ball L.A."/>
            <person name="Barrett C.J."/>
            <person name="Blake R.A."/>
            <person name="Boller A.J."/>
            <person name="Chain P.S.G."/>
            <person name="Clark J.A."/>
            <person name="Davis C.R."/>
            <person name="Detter C."/>
            <person name="Do K.F."/>
            <person name="Dobrinski K.P."/>
            <person name="Faza B.I."/>
            <person name="Fitzpatrick K.A."/>
            <person name="Freyermuth S.K."/>
            <person name="Harmer T.L."/>
            <person name="Hauser L.J."/>
            <person name="Huegler M."/>
            <person name="Kerfeld C.A."/>
            <person name="Klotz M.G."/>
            <person name="Kong W.W."/>
            <person name="Land M."/>
            <person name="Lapidus A."/>
            <person name="Larimer F.W."/>
            <person name="Longo D.L."/>
            <person name="Lucas S."/>
            <person name="Malfatti S.A."/>
            <person name="Massey S.E."/>
            <person name="Martin D.D."/>
            <person name="McCuddin Z."/>
            <person name="Meyer F."/>
            <person name="Moore J.L."/>
            <person name="Ocampo L.H. Jr."/>
            <person name="Paul J.H."/>
            <person name="Paulsen I.T."/>
            <person name="Reep D.K."/>
            <person name="Ren Q."/>
            <person name="Ross R.L."/>
            <person name="Sato P.Y."/>
            <person name="Thomas P."/>
            <person name="Tinkham L.E."/>
            <person name="Zeruth G.T."/>
        </authorList>
    </citation>
    <scope>NUCLEOTIDE SEQUENCE [LARGE SCALE GENOMIC DNA]</scope>
    <source>
        <strain>DSM 25203 / XCL-2</strain>
    </source>
</reference>
<comment type="function">
    <text evidence="1">Catalyzes the ATP-dependent phosphorylation of N-acetyl-L-glutamate.</text>
</comment>
<comment type="catalytic activity">
    <reaction evidence="1">
        <text>N-acetyl-L-glutamate + ATP = N-acetyl-L-glutamyl 5-phosphate + ADP</text>
        <dbReference type="Rhea" id="RHEA:14629"/>
        <dbReference type="ChEBI" id="CHEBI:30616"/>
        <dbReference type="ChEBI" id="CHEBI:44337"/>
        <dbReference type="ChEBI" id="CHEBI:57936"/>
        <dbReference type="ChEBI" id="CHEBI:456216"/>
        <dbReference type="EC" id="2.7.2.8"/>
    </reaction>
</comment>
<comment type="pathway">
    <text evidence="1">Amino-acid biosynthesis; L-arginine biosynthesis; N(2)-acetyl-L-ornithine from L-glutamate: step 2/4.</text>
</comment>
<comment type="subcellular location">
    <subcellularLocation>
        <location evidence="1">Cytoplasm</location>
    </subcellularLocation>
</comment>
<comment type="similarity">
    <text evidence="1">Belongs to the acetylglutamate kinase family. ArgB subfamily.</text>
</comment>
<comment type="sequence caution" evidence="2">
    <conflict type="erroneous initiation">
        <sequence resource="EMBL-CDS" id="ABB42489"/>
    </conflict>
</comment>
<feature type="chain" id="PRO_0000264781" description="Acetylglutamate kinase">
    <location>
        <begin position="1"/>
        <end position="298"/>
    </location>
</feature>
<feature type="binding site" evidence="1">
    <location>
        <begin position="68"/>
        <end position="69"/>
    </location>
    <ligand>
        <name>substrate</name>
    </ligand>
</feature>
<feature type="binding site" evidence="1">
    <location>
        <position position="90"/>
    </location>
    <ligand>
        <name>substrate</name>
    </ligand>
</feature>
<feature type="binding site" evidence="1">
    <location>
        <position position="195"/>
    </location>
    <ligand>
        <name>substrate</name>
    </ligand>
</feature>
<feature type="site" description="Transition state stabilizer" evidence="1">
    <location>
        <position position="33"/>
    </location>
</feature>
<feature type="site" description="Transition state stabilizer" evidence="1">
    <location>
        <position position="255"/>
    </location>
</feature>
<evidence type="ECO:0000255" key="1">
    <source>
        <dbReference type="HAMAP-Rule" id="MF_00082"/>
    </source>
</evidence>
<evidence type="ECO:0000305" key="2"/>
<name>ARGB_HYDCU</name>
<gene>
    <name evidence="1" type="primary">argB</name>
    <name type="ordered locus">Tcr_1899</name>
</gene>
<keyword id="KW-0028">Amino-acid biosynthesis</keyword>
<keyword id="KW-0055">Arginine biosynthesis</keyword>
<keyword id="KW-0067">ATP-binding</keyword>
<keyword id="KW-0963">Cytoplasm</keyword>
<keyword id="KW-0418">Kinase</keyword>
<keyword id="KW-0547">Nucleotide-binding</keyword>
<keyword id="KW-0808">Transferase</keyword>
<protein>
    <recommendedName>
        <fullName evidence="1">Acetylglutamate kinase</fullName>
        <ecNumber evidence="1">2.7.2.8</ecNumber>
    </recommendedName>
    <alternativeName>
        <fullName evidence="1">N-acetyl-L-glutamate 5-phosphotransferase</fullName>
    </alternativeName>
    <alternativeName>
        <fullName evidence="1">NAG kinase</fullName>
        <shortName evidence="1">NAGK</shortName>
    </alternativeName>
</protein>
<sequence>MNLNKAQAQNIASVLAEALPYIQRFSGKTIVVKYGGNAMTEEALKNGFARDIVLMKLVGMNPVVVHGGGPQIGHLLERVGKQSEFIQGMRVTDSETMDIVEMVLGGMVNKEIVNLIHQHNGNAVGLTGKDGNLIRAKKMEMTAFNEDLNAPELIDLGHVGEVERINTKVLDMLIQDDFIPVIAPVGVDEQGHSYNINADLVAGKVAEALHAEKLMLLTNTPGLLDKQGELLTGLNAESVAALIEDGTIYGGMLPKIQCALDAVQNGVESSHIIDGRVEHAVMLEVFTDEGVGTLITSH</sequence>
<organism>
    <name type="scientific">Hydrogenovibrio crunogenus (strain DSM 25203 / XCL-2)</name>
    <name type="common">Thiomicrospira crunogena</name>
    <dbReference type="NCBI Taxonomy" id="317025"/>
    <lineage>
        <taxon>Bacteria</taxon>
        <taxon>Pseudomonadati</taxon>
        <taxon>Pseudomonadota</taxon>
        <taxon>Gammaproteobacteria</taxon>
        <taxon>Thiotrichales</taxon>
        <taxon>Piscirickettsiaceae</taxon>
        <taxon>Hydrogenovibrio</taxon>
    </lineage>
</organism>